<keyword id="KW-0067">ATP-binding</keyword>
<keyword id="KW-0378">Hydrolase</keyword>
<keyword id="KW-0381">Hypersensitive response</keyword>
<keyword id="KW-0460">Magnesium</keyword>
<keyword id="KW-0472">Membrane</keyword>
<keyword id="KW-0547">Nucleotide-binding</keyword>
<keyword id="KW-0611">Plant defense</keyword>
<keyword id="KW-1185">Reference proteome</keyword>
<keyword id="KW-0812">Transmembrane</keyword>
<keyword id="KW-1133">Transmembrane helix</keyword>
<feature type="chain" id="PRO_0000434702" description="Protein HYPER-SENSITIVITY-RELATED 4">
    <location>
        <begin position="1"/>
        <end position="576"/>
    </location>
</feature>
<feature type="transmembrane region" description="Helical" evidence="2">
    <location>
        <begin position="55"/>
        <end position="75"/>
    </location>
</feature>
<feature type="region of interest" description="Disordered" evidence="3">
    <location>
        <begin position="508"/>
        <end position="532"/>
    </location>
</feature>
<feature type="binding site" evidence="2">
    <location>
        <begin position="306"/>
        <end position="313"/>
    </location>
    <ligand>
        <name>ATP</name>
        <dbReference type="ChEBI" id="CHEBI:30616"/>
    </ligand>
</feature>
<feature type="sequence conflict" description="In Ref. 4; AAM64718." evidence="11" ref="4">
    <original>K</original>
    <variation>R</variation>
    <location>
        <position position="522"/>
    </location>
</feature>
<organism evidence="12">
    <name type="scientific">Arabidopsis thaliana</name>
    <name type="common">Mouse-ear cress</name>
    <dbReference type="NCBI Taxonomy" id="3702"/>
    <lineage>
        <taxon>Eukaryota</taxon>
        <taxon>Viridiplantae</taxon>
        <taxon>Streptophyta</taxon>
        <taxon>Embryophyta</taxon>
        <taxon>Tracheophyta</taxon>
        <taxon>Spermatophyta</taxon>
        <taxon>Magnoliopsida</taxon>
        <taxon>eudicotyledons</taxon>
        <taxon>Gunneridae</taxon>
        <taxon>Pentapetalae</taxon>
        <taxon>rosids</taxon>
        <taxon>malvids</taxon>
        <taxon>Brassicales</taxon>
        <taxon>Brassicaceae</taxon>
        <taxon>Camelineae</taxon>
        <taxon>Arabidopsis</taxon>
    </lineage>
</organism>
<gene>
    <name evidence="10" type="primary">HSR4</name>
    <name type="synonym">BCS1</name>
    <name evidence="13" type="ordered locus">At3g50930</name>
    <name evidence="14" type="ORF">F18B3.210</name>
</gene>
<reference key="1">
    <citation type="journal article" date="2000" name="Nature">
        <title>Sequence and analysis of chromosome 3 of the plant Arabidopsis thaliana.</title>
        <authorList>
            <person name="Salanoubat M."/>
            <person name="Lemcke K."/>
            <person name="Rieger M."/>
            <person name="Ansorge W."/>
            <person name="Unseld M."/>
            <person name="Fartmann B."/>
            <person name="Valle G."/>
            <person name="Bloecker H."/>
            <person name="Perez-Alonso M."/>
            <person name="Obermaier B."/>
            <person name="Delseny M."/>
            <person name="Boutry M."/>
            <person name="Grivell L.A."/>
            <person name="Mache R."/>
            <person name="Puigdomenech P."/>
            <person name="De Simone V."/>
            <person name="Choisne N."/>
            <person name="Artiguenave F."/>
            <person name="Robert C."/>
            <person name="Brottier P."/>
            <person name="Wincker P."/>
            <person name="Cattolico L."/>
            <person name="Weissenbach J."/>
            <person name="Saurin W."/>
            <person name="Quetier F."/>
            <person name="Schaefer M."/>
            <person name="Mueller-Auer S."/>
            <person name="Gabel C."/>
            <person name="Fuchs M."/>
            <person name="Benes V."/>
            <person name="Wurmbach E."/>
            <person name="Drzonek H."/>
            <person name="Erfle H."/>
            <person name="Jordan N."/>
            <person name="Bangert S."/>
            <person name="Wiedelmann R."/>
            <person name="Kranz H."/>
            <person name="Voss H."/>
            <person name="Holland R."/>
            <person name="Brandt P."/>
            <person name="Nyakatura G."/>
            <person name="Vezzi A."/>
            <person name="D'Angelo M."/>
            <person name="Pallavicini A."/>
            <person name="Toppo S."/>
            <person name="Simionati B."/>
            <person name="Conrad A."/>
            <person name="Hornischer K."/>
            <person name="Kauer G."/>
            <person name="Loehnert T.-H."/>
            <person name="Nordsiek G."/>
            <person name="Reichelt J."/>
            <person name="Scharfe M."/>
            <person name="Schoen O."/>
            <person name="Bargues M."/>
            <person name="Terol J."/>
            <person name="Climent J."/>
            <person name="Navarro P."/>
            <person name="Collado C."/>
            <person name="Perez-Perez A."/>
            <person name="Ottenwaelder B."/>
            <person name="Duchemin D."/>
            <person name="Cooke R."/>
            <person name="Laudie M."/>
            <person name="Berger-Llauro C."/>
            <person name="Purnelle B."/>
            <person name="Masuy D."/>
            <person name="de Haan M."/>
            <person name="Maarse A.C."/>
            <person name="Alcaraz J.-P."/>
            <person name="Cottet A."/>
            <person name="Casacuberta E."/>
            <person name="Monfort A."/>
            <person name="Argiriou A."/>
            <person name="Flores M."/>
            <person name="Liguori R."/>
            <person name="Vitale D."/>
            <person name="Mannhaupt G."/>
            <person name="Haase D."/>
            <person name="Schoof H."/>
            <person name="Rudd S."/>
            <person name="Zaccaria P."/>
            <person name="Mewes H.-W."/>
            <person name="Mayer K.F.X."/>
            <person name="Kaul S."/>
            <person name="Town C.D."/>
            <person name="Koo H.L."/>
            <person name="Tallon L.J."/>
            <person name="Jenkins J."/>
            <person name="Rooney T."/>
            <person name="Rizzo M."/>
            <person name="Walts A."/>
            <person name="Utterback T."/>
            <person name="Fujii C.Y."/>
            <person name="Shea T.P."/>
            <person name="Creasy T.H."/>
            <person name="Haas B."/>
            <person name="Maiti R."/>
            <person name="Wu D."/>
            <person name="Peterson J."/>
            <person name="Van Aken S."/>
            <person name="Pai G."/>
            <person name="Militscher J."/>
            <person name="Sellers P."/>
            <person name="Gill J.E."/>
            <person name="Feldblyum T.V."/>
            <person name="Preuss D."/>
            <person name="Lin X."/>
            <person name="Nierman W.C."/>
            <person name="Salzberg S.L."/>
            <person name="White O."/>
            <person name="Venter J.C."/>
            <person name="Fraser C.M."/>
            <person name="Kaneko T."/>
            <person name="Nakamura Y."/>
            <person name="Sato S."/>
            <person name="Kato T."/>
            <person name="Asamizu E."/>
            <person name="Sasamoto S."/>
            <person name="Kimura T."/>
            <person name="Idesawa K."/>
            <person name="Kawashima K."/>
            <person name="Kishida Y."/>
            <person name="Kiyokawa C."/>
            <person name="Kohara M."/>
            <person name="Matsumoto M."/>
            <person name="Matsuno A."/>
            <person name="Muraki A."/>
            <person name="Nakayama S."/>
            <person name="Nakazaki N."/>
            <person name="Shinpo S."/>
            <person name="Takeuchi C."/>
            <person name="Wada T."/>
            <person name="Watanabe A."/>
            <person name="Yamada M."/>
            <person name="Yasuda M."/>
            <person name="Tabata S."/>
        </authorList>
    </citation>
    <scope>NUCLEOTIDE SEQUENCE [LARGE SCALE GENOMIC DNA]</scope>
    <source>
        <strain>cv. Columbia</strain>
    </source>
</reference>
<reference key="2">
    <citation type="journal article" date="2017" name="Plant J.">
        <title>Araport11: a complete reannotation of the Arabidopsis thaliana reference genome.</title>
        <authorList>
            <person name="Cheng C.Y."/>
            <person name="Krishnakumar V."/>
            <person name="Chan A.P."/>
            <person name="Thibaud-Nissen F."/>
            <person name="Schobel S."/>
            <person name="Town C.D."/>
        </authorList>
    </citation>
    <scope>GENOME REANNOTATION</scope>
    <source>
        <strain>cv. Columbia</strain>
    </source>
</reference>
<reference key="3">
    <citation type="journal article" date="2003" name="Science">
        <title>Empirical analysis of transcriptional activity in the Arabidopsis genome.</title>
        <authorList>
            <person name="Yamada K."/>
            <person name="Lim J."/>
            <person name="Dale J.M."/>
            <person name="Chen H."/>
            <person name="Shinn P."/>
            <person name="Palm C.J."/>
            <person name="Southwick A.M."/>
            <person name="Wu H.C."/>
            <person name="Kim C.J."/>
            <person name="Nguyen M."/>
            <person name="Pham P.K."/>
            <person name="Cheuk R.F."/>
            <person name="Karlin-Newmann G."/>
            <person name="Liu S.X."/>
            <person name="Lam B."/>
            <person name="Sakano H."/>
            <person name="Wu T."/>
            <person name="Yu G."/>
            <person name="Miranda M."/>
            <person name="Quach H.L."/>
            <person name="Tripp M."/>
            <person name="Chang C.H."/>
            <person name="Lee J.M."/>
            <person name="Toriumi M.J."/>
            <person name="Chan M.M."/>
            <person name="Tang C.C."/>
            <person name="Onodera C.S."/>
            <person name="Deng J.M."/>
            <person name="Akiyama K."/>
            <person name="Ansari Y."/>
            <person name="Arakawa T."/>
            <person name="Banh J."/>
            <person name="Banno F."/>
            <person name="Bowser L."/>
            <person name="Brooks S.Y."/>
            <person name="Carninci P."/>
            <person name="Chao Q."/>
            <person name="Choy N."/>
            <person name="Enju A."/>
            <person name="Goldsmith A.D."/>
            <person name="Gurjal M."/>
            <person name="Hansen N.F."/>
            <person name="Hayashizaki Y."/>
            <person name="Johnson-Hopson C."/>
            <person name="Hsuan V.W."/>
            <person name="Iida K."/>
            <person name="Karnes M."/>
            <person name="Khan S."/>
            <person name="Koesema E."/>
            <person name="Ishida J."/>
            <person name="Jiang P.X."/>
            <person name="Jones T."/>
            <person name="Kawai J."/>
            <person name="Kamiya A."/>
            <person name="Meyers C."/>
            <person name="Nakajima M."/>
            <person name="Narusaka M."/>
            <person name="Seki M."/>
            <person name="Sakurai T."/>
            <person name="Satou M."/>
            <person name="Tamse R."/>
            <person name="Vaysberg M."/>
            <person name="Wallender E.K."/>
            <person name="Wong C."/>
            <person name="Yamamura Y."/>
            <person name="Yuan S."/>
            <person name="Shinozaki K."/>
            <person name="Davis R.W."/>
            <person name="Theologis A."/>
            <person name="Ecker J.R."/>
        </authorList>
    </citation>
    <scope>NUCLEOTIDE SEQUENCE [LARGE SCALE MRNA]</scope>
    <source>
        <strain>cv. Columbia</strain>
    </source>
</reference>
<reference key="4">
    <citation type="submission" date="2002-03" db="EMBL/GenBank/DDBJ databases">
        <title>Full-length cDNA from Arabidopsis thaliana.</title>
        <authorList>
            <person name="Brover V.V."/>
            <person name="Troukhan M.E."/>
            <person name="Alexandrov N.A."/>
            <person name="Lu Y.-P."/>
            <person name="Flavell R.B."/>
            <person name="Feldmann K.A."/>
        </authorList>
    </citation>
    <scope>NUCLEOTIDE SEQUENCE [LARGE SCALE MRNA] OF 34-576</scope>
</reference>
<reference key="5">
    <citation type="journal article" date="1999" name="FEBS Lett.">
        <title>Identification of new early markers of the hypersensitive response in Arabidopsis thaliana.</title>
        <authorList>
            <person name="Lacomme C.J."/>
            <person name="Roby D."/>
        </authorList>
    </citation>
    <scope>INDUCTION BY XANTHOMONAS CAMPESTRIS</scope>
</reference>
<reference key="6">
    <citation type="journal article" date="2004" name="Plant Physiol.">
        <title>The transcriptional innate immune response to flg22. Interplay and overlap with Avr gene-dependent defense responses and bacterial pathogenesis.</title>
        <authorList>
            <person name="Navarro L."/>
            <person name="Zipfel C."/>
            <person name="Rowland O."/>
            <person name="Keller I."/>
            <person name="Robatzek S."/>
            <person name="Boller T."/>
            <person name="Jones J.D."/>
        </authorList>
    </citation>
    <scope>INDUCTION BY FLG22</scope>
</reference>
<reference key="7">
    <citation type="journal article" date="2004" name="Plant Physiol.">
        <title>Binding of arabinogalactan proteins by Yariv phenylglycoside triggers wound-like responses in Arabidopsis cell cultures.</title>
        <authorList>
            <person name="Guan Y."/>
            <person name="Nothnagel E.A."/>
        </authorList>
    </citation>
    <scope>INDUCTION BY YARIV PHENYLGLYCOSIDES</scope>
</reference>
<reference key="8">
    <citation type="journal article" date="2005" name="Plant Mol. Biol.">
        <title>Expression of the hypersensitive response-assisting protein in Arabidopsis results in harpin-dependent hypersensitive cell death in response to Erwinia carotovora.</title>
        <authorList>
            <person name="Pandey A.-K."/>
            <person name="Ger M.-J."/>
            <person name="Huang H.-E."/>
            <person name="Yip M.-K."/>
            <person name="Zeng J."/>
            <person name="Feng T.-Y."/>
        </authorList>
    </citation>
    <scope>INDUCTION BY ERWINIA CAROTOVORA</scope>
</reference>
<reference key="9">
    <citation type="journal article" date="2006" name="Plant Cell">
        <title>A comprehensive structure-function analysis of Arabidopsis SNI1 defines essential regions and transcriptional repressor activity.</title>
        <authorList>
            <person name="Mosher R.A."/>
            <person name="Durrant W.E."/>
            <person name="Wang D."/>
            <person name="Song J."/>
            <person name="Dong X."/>
        </authorList>
    </citation>
    <scope>INDUCTION BY BTH</scope>
</reference>
<reference key="10">
    <citation type="journal article" date="2008" name="Plant J.">
        <title>Detoxification of the explosive 2,4,6-trinitrotoluene in Arabidopsis: discovery of bifunctional O- and C-glucosyltransferases.</title>
        <authorList>
            <person name="Gandia-Herrero F."/>
            <person name="Lorenz A."/>
            <person name="Larson T."/>
            <person name="Graham I.A."/>
            <person name="Bowles D.J."/>
            <person name="Rylott E.L."/>
            <person name="Bruce N.C."/>
        </authorList>
    </citation>
    <scope>INDUCTION BY TNT</scope>
</reference>
<protein>
    <recommendedName>
        <fullName evidence="10">Protein HYPER-SENSITIVITY-RELATED 4</fullName>
        <shortName evidence="10">AtHSR4</shortName>
        <ecNumber evidence="1">3.6.1.-</ecNumber>
    </recommendedName>
    <alternativeName>
        <fullName>BCS1-like protein</fullName>
    </alternativeName>
</protein>
<comment type="catalytic activity">
    <reaction evidence="1">
        <text>ATP + H2O = ADP + phosphate + H(+)</text>
        <dbReference type="Rhea" id="RHEA:13065"/>
        <dbReference type="ChEBI" id="CHEBI:15377"/>
        <dbReference type="ChEBI" id="CHEBI:15378"/>
        <dbReference type="ChEBI" id="CHEBI:30616"/>
        <dbReference type="ChEBI" id="CHEBI:43474"/>
        <dbReference type="ChEBI" id="CHEBI:456216"/>
    </reaction>
</comment>
<comment type="cofactor">
    <cofactor evidence="1">
        <name>Mg(2+)</name>
        <dbReference type="ChEBI" id="CHEBI:18420"/>
    </cofactor>
</comment>
<comment type="subunit">
    <text evidence="6">Binds to the Yariv phenylglycoside (beta-D-Glc)(3).</text>
</comment>
<comment type="subcellular location">
    <subcellularLocation>
        <location evidence="2">Membrane</location>
        <topology evidence="2">Single-pass membrane protein</topology>
    </subcellularLocation>
</comment>
<comment type="induction">
    <text evidence="4 5 6 7 8 9">Accumulates in response to flg22, thus being a FLARE (flagellin rapidly elicited gene) (PubMed:15181213). Up-regulated by the Yariv phenylglycoside (beta-D-Glc)(3) (PubMed:15235117). Expressed during hypersensitive response (HR) mediated by the bacterial pathogen Xanthomonas campestris pv. campestris (PubMed:10518009). Slightly induced by the virulent pathogen Erwinia carotovora subsp. carotovora (PubMed:16270229). Triggered by benzothiadiazole S-methylester (BTH) (PubMed:16766691). Accumulates in the presence of 2,4,6-trinitrotoluene (TNT) (PubMed:18702669).</text>
</comment>
<comment type="similarity">
    <text evidence="11">Belongs to the AAA ATPase family. BCS1 subfamily.</text>
</comment>
<comment type="sequence caution" evidence="11">
    <conflict type="erroneous initiation">
        <sequence resource="EMBL-CDS" id="AAM26687"/>
    </conflict>
    <text>Truncated N-terminus.</text>
</comment>
<comment type="sequence caution" evidence="11">
    <conflict type="erroneous initiation">
        <sequence resource="EMBL-CDS" id="AAM64718"/>
    </conflict>
    <text>Truncated N-terminus.</text>
</comment>
<comment type="sequence caution" evidence="11">
    <conflict type="erroneous initiation">
        <sequence resource="EMBL-CDS" id="CAB42922"/>
    </conflict>
    <text>Truncated N-terminus.</text>
</comment>
<accession>Q8VZG2</accession>
<accession>Q8LBK2</accession>
<accession>Q9SVK6</accession>
<proteinExistence type="evidence at transcript level"/>
<dbReference type="EC" id="3.6.1.-" evidence="1"/>
<dbReference type="EMBL" id="AL049862">
    <property type="protein sequence ID" value="CAB42922.1"/>
    <property type="status" value="ALT_INIT"/>
    <property type="molecule type" value="Genomic_DNA"/>
</dbReference>
<dbReference type="EMBL" id="CP002686">
    <property type="protein sequence ID" value="AEE78728.1"/>
    <property type="molecule type" value="Genomic_DNA"/>
</dbReference>
<dbReference type="EMBL" id="AF370607">
    <property type="protein sequence ID" value="AAK43926.1"/>
    <property type="molecule type" value="mRNA"/>
</dbReference>
<dbReference type="EMBL" id="AY064981">
    <property type="protein sequence ID" value="AAL57634.1"/>
    <property type="molecule type" value="mRNA"/>
</dbReference>
<dbReference type="EMBL" id="AY102119">
    <property type="protein sequence ID" value="AAM26687.1"/>
    <property type="status" value="ALT_INIT"/>
    <property type="molecule type" value="mRNA"/>
</dbReference>
<dbReference type="EMBL" id="BT002611">
    <property type="protein sequence ID" value="AAO11527.1"/>
    <property type="molecule type" value="mRNA"/>
</dbReference>
<dbReference type="EMBL" id="AY087160">
    <property type="protein sequence ID" value="AAM64718.1"/>
    <property type="status" value="ALT_INIT"/>
    <property type="molecule type" value="mRNA"/>
</dbReference>
<dbReference type="PIR" id="T08414">
    <property type="entry name" value="T08414"/>
</dbReference>
<dbReference type="RefSeq" id="NP_190662.2">
    <property type="nucleotide sequence ID" value="NM_114953.3"/>
</dbReference>
<dbReference type="SMR" id="Q8VZG2"/>
<dbReference type="FunCoup" id="Q8VZG2">
    <property type="interactions" value="1480"/>
</dbReference>
<dbReference type="IntAct" id="Q8VZG2">
    <property type="interactions" value="2"/>
</dbReference>
<dbReference type="STRING" id="3702.Q8VZG2"/>
<dbReference type="iPTMnet" id="Q8VZG2"/>
<dbReference type="PaxDb" id="3702-AT3G50930.1"/>
<dbReference type="ProteomicsDB" id="232118"/>
<dbReference type="EnsemblPlants" id="AT3G50930.1">
    <property type="protein sequence ID" value="AT3G50930.1"/>
    <property type="gene ID" value="AT3G50930"/>
</dbReference>
<dbReference type="GeneID" id="824257"/>
<dbReference type="Gramene" id="AT3G50930.1">
    <property type="protein sequence ID" value="AT3G50930.1"/>
    <property type="gene ID" value="AT3G50930"/>
</dbReference>
<dbReference type="KEGG" id="ath:AT3G50930"/>
<dbReference type="Araport" id="AT3G50930"/>
<dbReference type="TAIR" id="AT3G50930">
    <property type="gene designation" value="BCS1"/>
</dbReference>
<dbReference type="eggNOG" id="KOG0743">
    <property type="taxonomic scope" value="Eukaryota"/>
</dbReference>
<dbReference type="HOGENOM" id="CLU_010189_0_2_1"/>
<dbReference type="InParanoid" id="Q8VZG2"/>
<dbReference type="OMA" id="PDEVHHY"/>
<dbReference type="PhylomeDB" id="Q8VZG2"/>
<dbReference type="CD-CODE" id="4299E36E">
    <property type="entry name" value="Nucleolus"/>
</dbReference>
<dbReference type="PRO" id="PR:Q8VZG2"/>
<dbReference type="Proteomes" id="UP000006548">
    <property type="component" value="Chromosome 3"/>
</dbReference>
<dbReference type="ExpressionAtlas" id="Q8VZG2">
    <property type="expression patterns" value="baseline and differential"/>
</dbReference>
<dbReference type="GO" id="GO:0005740">
    <property type="term" value="C:mitochondrial envelope"/>
    <property type="evidence" value="ECO:0000314"/>
    <property type="project" value="TAIR"/>
</dbReference>
<dbReference type="GO" id="GO:0005741">
    <property type="term" value="C:mitochondrial outer membrane"/>
    <property type="evidence" value="ECO:0000314"/>
    <property type="project" value="TAIR"/>
</dbReference>
<dbReference type="GO" id="GO:0005739">
    <property type="term" value="C:mitochondrion"/>
    <property type="evidence" value="ECO:0007005"/>
    <property type="project" value="TAIR"/>
</dbReference>
<dbReference type="GO" id="GO:0005524">
    <property type="term" value="F:ATP binding"/>
    <property type="evidence" value="ECO:0007669"/>
    <property type="project" value="UniProtKB-KW"/>
</dbReference>
<dbReference type="GO" id="GO:0016887">
    <property type="term" value="F:ATP hydrolysis activity"/>
    <property type="evidence" value="ECO:0007669"/>
    <property type="project" value="InterPro"/>
</dbReference>
<dbReference type="GO" id="GO:0042802">
    <property type="term" value="F:identical protein binding"/>
    <property type="evidence" value="ECO:0000353"/>
    <property type="project" value="TAIR"/>
</dbReference>
<dbReference type="GO" id="GO:0008219">
    <property type="term" value="P:cell death"/>
    <property type="evidence" value="ECO:0000315"/>
    <property type="project" value="TAIR"/>
</dbReference>
<dbReference type="GO" id="GO:0009626">
    <property type="term" value="P:plant-type hypersensitive response"/>
    <property type="evidence" value="ECO:0000270"/>
    <property type="project" value="UniProtKB"/>
</dbReference>
<dbReference type="GO" id="GO:0009617">
    <property type="term" value="P:response to bacterium"/>
    <property type="evidence" value="ECO:0000270"/>
    <property type="project" value="UniProtKB"/>
</dbReference>
<dbReference type="GO" id="GO:0002237">
    <property type="term" value="P:response to molecule of bacterial origin"/>
    <property type="evidence" value="ECO:0000270"/>
    <property type="project" value="UniProtKB"/>
</dbReference>
<dbReference type="GO" id="GO:0009411">
    <property type="term" value="P:response to UV"/>
    <property type="evidence" value="ECO:0000270"/>
    <property type="project" value="TAIR"/>
</dbReference>
<dbReference type="GO" id="GO:0009863">
    <property type="term" value="P:salicylic acid mediated signaling pathway"/>
    <property type="evidence" value="ECO:0000315"/>
    <property type="project" value="TAIR"/>
</dbReference>
<dbReference type="CDD" id="cd19510">
    <property type="entry name" value="RecA-like_BCS1"/>
    <property type="match status" value="1"/>
</dbReference>
<dbReference type="FunFam" id="3.40.50.300:FF:001122">
    <property type="entry name" value="AAA-ATPase ASD, mitochondrial"/>
    <property type="match status" value="1"/>
</dbReference>
<dbReference type="Gene3D" id="6.10.280.40">
    <property type="match status" value="1"/>
</dbReference>
<dbReference type="Gene3D" id="3.40.50.300">
    <property type="entry name" value="P-loop containing nucleotide triphosphate hydrolases"/>
    <property type="match status" value="1"/>
</dbReference>
<dbReference type="InterPro" id="IPR003593">
    <property type="entry name" value="AAA+_ATPase"/>
</dbReference>
<dbReference type="InterPro" id="IPR025753">
    <property type="entry name" value="AAA_N_dom"/>
</dbReference>
<dbReference type="InterPro" id="IPR003959">
    <property type="entry name" value="ATPase_AAA_core"/>
</dbReference>
<dbReference type="InterPro" id="IPR003960">
    <property type="entry name" value="ATPase_AAA_CS"/>
</dbReference>
<dbReference type="InterPro" id="IPR050747">
    <property type="entry name" value="Mitochondrial_chaperone_BCS1"/>
</dbReference>
<dbReference type="InterPro" id="IPR027417">
    <property type="entry name" value="P-loop_NTPase"/>
</dbReference>
<dbReference type="PANTHER" id="PTHR23070">
    <property type="entry name" value="BCS1 AAA-TYPE ATPASE"/>
    <property type="match status" value="1"/>
</dbReference>
<dbReference type="Pfam" id="PF00004">
    <property type="entry name" value="AAA"/>
    <property type="match status" value="1"/>
</dbReference>
<dbReference type="Pfam" id="PF14363">
    <property type="entry name" value="AAA_assoc"/>
    <property type="match status" value="1"/>
</dbReference>
<dbReference type="SMART" id="SM00382">
    <property type="entry name" value="AAA"/>
    <property type="match status" value="1"/>
</dbReference>
<dbReference type="SUPFAM" id="SSF52540">
    <property type="entry name" value="P-loop containing nucleoside triphosphate hydrolases"/>
    <property type="match status" value="1"/>
</dbReference>
<dbReference type="PROSITE" id="PS00674">
    <property type="entry name" value="AAA"/>
    <property type="match status" value="1"/>
</dbReference>
<evidence type="ECO:0000250" key="1">
    <source>
        <dbReference type="UniProtKB" id="Q9FLD5"/>
    </source>
</evidence>
<evidence type="ECO:0000255" key="2"/>
<evidence type="ECO:0000256" key="3">
    <source>
        <dbReference type="SAM" id="MobiDB-lite"/>
    </source>
</evidence>
<evidence type="ECO:0000269" key="4">
    <source>
    </source>
</evidence>
<evidence type="ECO:0000269" key="5">
    <source>
    </source>
</evidence>
<evidence type="ECO:0000269" key="6">
    <source>
    </source>
</evidence>
<evidence type="ECO:0000269" key="7">
    <source>
    </source>
</evidence>
<evidence type="ECO:0000269" key="8">
    <source>
    </source>
</evidence>
<evidence type="ECO:0000269" key="9">
    <source>
    </source>
</evidence>
<evidence type="ECO:0000303" key="10">
    <source>
    </source>
</evidence>
<evidence type="ECO:0000305" key="11"/>
<evidence type="ECO:0000312" key="12">
    <source>
        <dbReference type="EMBL" id="AAL57634.1"/>
    </source>
</evidence>
<evidence type="ECO:0000312" key="13">
    <source>
        <dbReference type="EMBL" id="AEE78728.1"/>
    </source>
</evidence>
<evidence type="ECO:0000312" key="14">
    <source>
        <dbReference type="EMBL" id="CAB42922.1"/>
    </source>
</evidence>
<name>HSR4_ARATH</name>
<sequence length="576" mass="66136">MEGSKLLPCVHKSPVPTSHQLYINYEILGLTKLKKHKYTQNKMSSSDSSSAESRLATAKTVLTTAASVAATAMLARSLVQDYLPDEVHHYISYGFRSIFGYFSSQMTIIIEEFEGFAHNEVFEAAEAYLATKISPSNKRIKVSKHEKENNYNVTVERDEEVVDTYNGVKFQWILHCRHVESKHFHNPRDLNSTLRSEVRSFELNFHKKFKDVALESYLPFMVKRATLMKQEKKTLKIFTLSPENMYGNYSDAWTSVTLDHPSTFKTLAMDSDVKTSVMEDLDKFVKRRDFYKRVGKAWKRGYLLYGPPGTGKSSLIAAMANHLNFDIYDLELTAVNNNSELRRLLIATANRSILIVEDIDCSLELKDRTSDEPPRESDDIEDPRYKKVTLSGLLNFIDGLWSSCGDERIIIFTTNYKEKLDAALLRPGRMDMHIHMSYCTPSTFKALALNYLEIKEHRLFSKIEEGIEATEVTPAEVAEQLMRNDSVDKVLEGLIEFLKVKKIENEQDKAKTEKQELENKKKTKEGTDSVVKKEVDEQLVRNDRVDKVLEGLVELLKAKKIEDDQDKAKHEEVEQH</sequence>